<gene>
    <name evidence="1" type="primary">thiM</name>
    <name type="ordered locus">PH1157</name>
</gene>
<keyword id="KW-0002">3D-structure</keyword>
<keyword id="KW-0067">ATP-binding</keyword>
<keyword id="KW-0418">Kinase</keyword>
<keyword id="KW-0460">Magnesium</keyword>
<keyword id="KW-0479">Metal-binding</keyword>
<keyword id="KW-0547">Nucleotide-binding</keyword>
<keyword id="KW-0784">Thiamine biosynthesis</keyword>
<keyword id="KW-0808">Transferase</keyword>
<organism>
    <name type="scientific">Pyrococcus horikoshii (strain ATCC 700860 / DSM 12428 / JCM 9974 / NBRC 100139 / OT-3)</name>
    <dbReference type="NCBI Taxonomy" id="70601"/>
    <lineage>
        <taxon>Archaea</taxon>
        <taxon>Methanobacteriati</taxon>
        <taxon>Methanobacteriota</taxon>
        <taxon>Thermococci</taxon>
        <taxon>Thermococcales</taxon>
        <taxon>Thermococcaceae</taxon>
        <taxon>Pyrococcus</taxon>
    </lineage>
</organism>
<feature type="chain" id="PRO_0000156972" description="Hydroxyethylthiazole kinase">
    <location>
        <begin position="1"/>
        <end position="265"/>
    </location>
</feature>
<feature type="binding site" evidence="1">
    <location>
        <position position="43"/>
    </location>
    <ligand>
        <name>substrate</name>
    </ligand>
</feature>
<feature type="binding site" evidence="1">
    <location>
        <position position="118"/>
    </location>
    <ligand>
        <name>ATP</name>
        <dbReference type="ChEBI" id="CHEBI:30616"/>
    </ligand>
</feature>
<feature type="binding site" evidence="1">
    <location>
        <position position="165"/>
    </location>
    <ligand>
        <name>ATP</name>
        <dbReference type="ChEBI" id="CHEBI:30616"/>
    </ligand>
</feature>
<feature type="binding site" evidence="1">
    <location>
        <position position="192"/>
    </location>
    <ligand>
        <name>substrate</name>
    </ligand>
</feature>
<feature type="helix" evidence="2">
    <location>
        <begin position="2"/>
        <end position="14"/>
    </location>
</feature>
<feature type="strand" evidence="2">
    <location>
        <begin position="17"/>
        <end position="21"/>
    </location>
</feature>
<feature type="turn" evidence="2">
    <location>
        <begin position="24"/>
        <end position="26"/>
    </location>
</feature>
<feature type="helix" evidence="2">
    <location>
        <begin position="27"/>
        <end position="37"/>
    </location>
</feature>
<feature type="strand" evidence="2">
    <location>
        <begin position="40"/>
        <end position="43"/>
    </location>
</feature>
<feature type="turn" evidence="2">
    <location>
        <begin position="47"/>
        <end position="49"/>
    </location>
</feature>
<feature type="helix" evidence="2">
    <location>
        <begin position="50"/>
        <end position="56"/>
    </location>
</feature>
<feature type="strand" evidence="2">
    <location>
        <begin position="58"/>
        <end position="63"/>
    </location>
</feature>
<feature type="helix" evidence="2">
    <location>
        <begin position="69"/>
        <end position="85"/>
    </location>
</feature>
<feature type="strand" evidence="2">
    <location>
        <begin position="89"/>
        <end position="92"/>
    </location>
</feature>
<feature type="helix" evidence="2">
    <location>
        <begin position="100"/>
        <end position="112"/>
    </location>
</feature>
<feature type="strand" evidence="2">
    <location>
        <begin position="115"/>
        <end position="120"/>
    </location>
</feature>
<feature type="helix" evidence="2">
    <location>
        <begin position="121"/>
        <end position="131"/>
    </location>
</feature>
<feature type="helix" evidence="2">
    <location>
        <begin position="144"/>
        <end position="157"/>
    </location>
</feature>
<feature type="strand" evidence="2">
    <location>
        <begin position="160"/>
        <end position="172"/>
    </location>
</feature>
<feature type="strand" evidence="2">
    <location>
        <begin position="177"/>
        <end position="180"/>
    </location>
</feature>
<feature type="helix" evidence="2">
    <location>
        <begin position="185"/>
        <end position="189"/>
    </location>
</feature>
<feature type="helix" evidence="2">
    <location>
        <begin position="193"/>
        <end position="205"/>
    </location>
</feature>
<feature type="helix" evidence="2">
    <location>
        <begin position="210"/>
        <end position="231"/>
    </location>
</feature>
<feature type="helix" evidence="2">
    <location>
        <begin position="235"/>
        <end position="248"/>
    </location>
</feature>
<feature type="helix" evidence="2">
    <location>
        <begin position="251"/>
        <end position="257"/>
    </location>
</feature>
<feature type="strand" evidence="2">
    <location>
        <begin position="260"/>
        <end position="263"/>
    </location>
</feature>
<protein>
    <recommendedName>
        <fullName evidence="1">Hydroxyethylthiazole kinase</fullName>
        <ecNumber evidence="1">2.7.1.50</ecNumber>
    </recommendedName>
    <alternativeName>
        <fullName evidence="1">4-methyl-5-beta-hydroxyethylthiazole kinase</fullName>
        <shortName evidence="1">TH kinase</shortName>
        <shortName evidence="1">Thz kinase</shortName>
    </alternativeName>
</protein>
<sequence length="265" mass="28954">MKFIIEALKRVRERRPLVHNITNFVVMNTTANALLALGASPVMAHAEEELEEMIRLADAVVINIGTLDSGWRRSMVKATEIANELGKPIVLDPVGAGATKFRTRVSLEILSRGVDVLKGNFGEISALLGEEGKTRGVDSLEYGEEEAKKLTMNAAREFNTTVAVTGAVDYVSDGRRTFAVYNGHELLGRVTGTGCMVAALTGAFVAVTEPLKATTSALVTFGIAAEKAYEEAKYPGSFHVKLYDWLYRINENVIRTYAKVREVEL</sequence>
<dbReference type="EC" id="2.7.1.50" evidence="1"/>
<dbReference type="EMBL" id="BA000001">
    <property type="protein sequence ID" value="BAA30257.1"/>
    <property type="molecule type" value="Genomic_DNA"/>
</dbReference>
<dbReference type="PIR" id="G71057">
    <property type="entry name" value="G71057"/>
</dbReference>
<dbReference type="RefSeq" id="WP_010885242.1">
    <property type="nucleotide sequence ID" value="NC_000961.1"/>
</dbReference>
<dbReference type="PDB" id="3HPD">
    <property type="method" value="X-ray"/>
    <property type="resolution" value="1.85 A"/>
    <property type="chains" value="A=1-265"/>
</dbReference>
<dbReference type="PDBsum" id="3HPD"/>
<dbReference type="SMR" id="O58877"/>
<dbReference type="STRING" id="70601.gene:9378118"/>
<dbReference type="EnsemblBacteria" id="BAA30257">
    <property type="protein sequence ID" value="BAA30257"/>
    <property type="gene ID" value="BAA30257"/>
</dbReference>
<dbReference type="GeneID" id="1443477"/>
<dbReference type="KEGG" id="pho:PH1157"/>
<dbReference type="eggNOG" id="arCOG00019">
    <property type="taxonomic scope" value="Archaea"/>
</dbReference>
<dbReference type="OrthoDB" id="214286at2157"/>
<dbReference type="BRENDA" id="2.7.1.50">
    <property type="organism ID" value="7183"/>
</dbReference>
<dbReference type="UniPathway" id="UPA00060">
    <property type="reaction ID" value="UER00139"/>
</dbReference>
<dbReference type="EvolutionaryTrace" id="O58877"/>
<dbReference type="Proteomes" id="UP000000752">
    <property type="component" value="Chromosome"/>
</dbReference>
<dbReference type="GO" id="GO:0005524">
    <property type="term" value="F:ATP binding"/>
    <property type="evidence" value="ECO:0007669"/>
    <property type="project" value="UniProtKB-UniRule"/>
</dbReference>
<dbReference type="GO" id="GO:0004417">
    <property type="term" value="F:hydroxyethylthiazole kinase activity"/>
    <property type="evidence" value="ECO:0007669"/>
    <property type="project" value="UniProtKB-UniRule"/>
</dbReference>
<dbReference type="GO" id="GO:0000287">
    <property type="term" value="F:magnesium ion binding"/>
    <property type="evidence" value="ECO:0007669"/>
    <property type="project" value="UniProtKB-UniRule"/>
</dbReference>
<dbReference type="GO" id="GO:0009228">
    <property type="term" value="P:thiamine biosynthetic process"/>
    <property type="evidence" value="ECO:0007669"/>
    <property type="project" value="UniProtKB-KW"/>
</dbReference>
<dbReference type="GO" id="GO:0009229">
    <property type="term" value="P:thiamine diphosphate biosynthetic process"/>
    <property type="evidence" value="ECO:0007669"/>
    <property type="project" value="UniProtKB-UniRule"/>
</dbReference>
<dbReference type="CDD" id="cd01170">
    <property type="entry name" value="THZ_kinase"/>
    <property type="match status" value="1"/>
</dbReference>
<dbReference type="Gene3D" id="3.40.1190.20">
    <property type="match status" value="1"/>
</dbReference>
<dbReference type="HAMAP" id="MF_00228">
    <property type="entry name" value="Thz_kinase"/>
    <property type="match status" value="1"/>
</dbReference>
<dbReference type="InterPro" id="IPR000417">
    <property type="entry name" value="Hyethyz_kinase"/>
</dbReference>
<dbReference type="InterPro" id="IPR029056">
    <property type="entry name" value="Ribokinase-like"/>
</dbReference>
<dbReference type="NCBIfam" id="NF006830">
    <property type="entry name" value="PRK09355.1"/>
    <property type="match status" value="1"/>
</dbReference>
<dbReference type="NCBIfam" id="TIGR00694">
    <property type="entry name" value="thiM"/>
    <property type="match status" value="1"/>
</dbReference>
<dbReference type="Pfam" id="PF02110">
    <property type="entry name" value="HK"/>
    <property type="match status" value="1"/>
</dbReference>
<dbReference type="PIRSF" id="PIRSF000513">
    <property type="entry name" value="Thz_kinase"/>
    <property type="match status" value="1"/>
</dbReference>
<dbReference type="PRINTS" id="PR01099">
    <property type="entry name" value="HYETHTZKNASE"/>
</dbReference>
<dbReference type="SUPFAM" id="SSF53613">
    <property type="entry name" value="Ribokinase-like"/>
    <property type="match status" value="1"/>
</dbReference>
<reference key="1">
    <citation type="journal article" date="1998" name="DNA Res.">
        <title>Complete sequence and gene organization of the genome of a hyper-thermophilic archaebacterium, Pyrococcus horikoshii OT3.</title>
        <authorList>
            <person name="Kawarabayasi Y."/>
            <person name="Sawada M."/>
            <person name="Horikawa H."/>
            <person name="Haikawa Y."/>
            <person name="Hino Y."/>
            <person name="Yamamoto S."/>
            <person name="Sekine M."/>
            <person name="Baba S."/>
            <person name="Kosugi H."/>
            <person name="Hosoyama A."/>
            <person name="Nagai Y."/>
            <person name="Sakai M."/>
            <person name="Ogura K."/>
            <person name="Otsuka R."/>
            <person name="Nakazawa H."/>
            <person name="Takamiya M."/>
            <person name="Ohfuku Y."/>
            <person name="Funahashi T."/>
            <person name="Tanaka T."/>
            <person name="Kudoh Y."/>
            <person name="Yamazaki J."/>
            <person name="Kushida N."/>
            <person name="Oguchi A."/>
            <person name="Aoki K."/>
            <person name="Yoshizawa T."/>
            <person name="Nakamura Y."/>
            <person name="Robb F.T."/>
            <person name="Horikoshi K."/>
            <person name="Masuchi Y."/>
            <person name="Shizuya H."/>
            <person name="Kikuchi H."/>
        </authorList>
    </citation>
    <scope>NUCLEOTIDE SEQUENCE [LARGE SCALE GENOMIC DNA]</scope>
    <source>
        <strain>ATCC 700860 / DSM 12428 / JCM 9974 / NBRC 100139 / OT-3</strain>
    </source>
</reference>
<reference key="2">
    <citation type="submission" date="2009-06" db="PDB data bank">
        <title>Structure of hydroxyethylthiazole kinase protein from Pyrococcus horikoshii OT3.</title>
        <authorList>
            <consortium name="RIKEN structural genomics initiative (RSGI)"/>
        </authorList>
    </citation>
    <scope>X-RAY CRYSTALLOGRAPHY (1.85 ANGSTROMS)</scope>
    <source>
        <strain>ATCC 700860 / DSM 12428 / JCM 9974 / NBRC 100139 / OT-3</strain>
    </source>
</reference>
<proteinExistence type="evidence at protein level"/>
<accession>O58877</accession>
<name>THIM_PYRHO</name>
<comment type="function">
    <text evidence="1">Catalyzes the phosphorylation of the hydroxyl group of 4-methyl-5-beta-hydroxyethylthiazole (THZ).</text>
</comment>
<comment type="catalytic activity">
    <reaction evidence="1">
        <text>5-(2-hydroxyethyl)-4-methylthiazole + ATP = 4-methyl-5-(2-phosphooxyethyl)-thiazole + ADP + H(+)</text>
        <dbReference type="Rhea" id="RHEA:24212"/>
        <dbReference type="ChEBI" id="CHEBI:15378"/>
        <dbReference type="ChEBI" id="CHEBI:17957"/>
        <dbReference type="ChEBI" id="CHEBI:30616"/>
        <dbReference type="ChEBI" id="CHEBI:58296"/>
        <dbReference type="ChEBI" id="CHEBI:456216"/>
        <dbReference type="EC" id="2.7.1.50"/>
    </reaction>
</comment>
<comment type="cofactor">
    <cofactor evidence="1">
        <name>Mg(2+)</name>
        <dbReference type="ChEBI" id="CHEBI:18420"/>
    </cofactor>
</comment>
<comment type="pathway">
    <text evidence="1">Cofactor biosynthesis; thiamine diphosphate biosynthesis; 4-methyl-5-(2-phosphoethyl)-thiazole from 5-(2-hydroxyethyl)-4-methylthiazole: step 1/1.</text>
</comment>
<comment type="similarity">
    <text evidence="1">Belongs to the Thz kinase family.</text>
</comment>
<evidence type="ECO:0000255" key="1">
    <source>
        <dbReference type="HAMAP-Rule" id="MF_00228"/>
    </source>
</evidence>
<evidence type="ECO:0007829" key="2">
    <source>
        <dbReference type="PDB" id="3HPD"/>
    </source>
</evidence>